<accession>Q1D8S3</accession>
<name>NUOB_MYXXD</name>
<sequence length="187" mass="20871">MADADLANIVTTRRDESMGWLQSIVSKGLGWARKYSLFTYPYATACCGMEYMSVAASRHDISRFGAEFPRFSPRQADLLMVVGTINLKQAPILKRVYEQMAEPKWVVAFGVCASSGGFYDNYAVLQGIDRIIPVDVYIPGCPPRPEQVLDGLMLLQDKIGNQVHRIAEREEANPTAARHNLLLSMNK</sequence>
<keyword id="KW-0004">4Fe-4S</keyword>
<keyword id="KW-0997">Cell inner membrane</keyword>
<keyword id="KW-1003">Cell membrane</keyword>
<keyword id="KW-0408">Iron</keyword>
<keyword id="KW-0411">Iron-sulfur</keyword>
<keyword id="KW-0472">Membrane</keyword>
<keyword id="KW-0479">Metal-binding</keyword>
<keyword id="KW-0520">NAD</keyword>
<keyword id="KW-0874">Quinone</keyword>
<keyword id="KW-1185">Reference proteome</keyword>
<keyword id="KW-1278">Translocase</keyword>
<keyword id="KW-0813">Transport</keyword>
<keyword id="KW-0830">Ubiquinone</keyword>
<protein>
    <recommendedName>
        <fullName evidence="1">NADH-quinone oxidoreductase subunit B</fullName>
        <ecNumber evidence="1">7.1.1.-</ecNumber>
    </recommendedName>
    <alternativeName>
        <fullName evidence="1">NADH dehydrogenase I subunit B</fullName>
    </alternativeName>
    <alternativeName>
        <fullName evidence="1">NDH-1 subunit B</fullName>
    </alternativeName>
</protein>
<dbReference type="EC" id="7.1.1.-" evidence="1"/>
<dbReference type="EMBL" id="CP000113">
    <property type="protein sequence ID" value="ABF87142.1"/>
    <property type="molecule type" value="Genomic_DNA"/>
</dbReference>
<dbReference type="RefSeq" id="WP_011552800.1">
    <property type="nucleotide sequence ID" value="NC_008095.1"/>
</dbReference>
<dbReference type="SMR" id="Q1D8S3"/>
<dbReference type="STRING" id="246197.MXAN_2733"/>
<dbReference type="EnsemblBacteria" id="ABF87142">
    <property type="protein sequence ID" value="ABF87142"/>
    <property type="gene ID" value="MXAN_2733"/>
</dbReference>
<dbReference type="GeneID" id="41360110"/>
<dbReference type="KEGG" id="mxa:MXAN_2733"/>
<dbReference type="eggNOG" id="COG0377">
    <property type="taxonomic scope" value="Bacteria"/>
</dbReference>
<dbReference type="HOGENOM" id="CLU_055737_7_3_7"/>
<dbReference type="OrthoDB" id="9786737at2"/>
<dbReference type="Proteomes" id="UP000002402">
    <property type="component" value="Chromosome"/>
</dbReference>
<dbReference type="GO" id="GO:0005886">
    <property type="term" value="C:plasma membrane"/>
    <property type="evidence" value="ECO:0007669"/>
    <property type="project" value="UniProtKB-SubCell"/>
</dbReference>
<dbReference type="GO" id="GO:0045271">
    <property type="term" value="C:respiratory chain complex I"/>
    <property type="evidence" value="ECO:0007669"/>
    <property type="project" value="TreeGrafter"/>
</dbReference>
<dbReference type="GO" id="GO:0051539">
    <property type="term" value="F:4 iron, 4 sulfur cluster binding"/>
    <property type="evidence" value="ECO:0007669"/>
    <property type="project" value="UniProtKB-KW"/>
</dbReference>
<dbReference type="GO" id="GO:0005506">
    <property type="term" value="F:iron ion binding"/>
    <property type="evidence" value="ECO:0007669"/>
    <property type="project" value="UniProtKB-UniRule"/>
</dbReference>
<dbReference type="GO" id="GO:0008137">
    <property type="term" value="F:NADH dehydrogenase (ubiquinone) activity"/>
    <property type="evidence" value="ECO:0007669"/>
    <property type="project" value="InterPro"/>
</dbReference>
<dbReference type="GO" id="GO:0050136">
    <property type="term" value="F:NADH:ubiquinone reductase (non-electrogenic) activity"/>
    <property type="evidence" value="ECO:0007669"/>
    <property type="project" value="UniProtKB-UniRule"/>
</dbReference>
<dbReference type="GO" id="GO:0048038">
    <property type="term" value="F:quinone binding"/>
    <property type="evidence" value="ECO:0007669"/>
    <property type="project" value="UniProtKB-KW"/>
</dbReference>
<dbReference type="GO" id="GO:0009060">
    <property type="term" value="P:aerobic respiration"/>
    <property type="evidence" value="ECO:0007669"/>
    <property type="project" value="TreeGrafter"/>
</dbReference>
<dbReference type="GO" id="GO:0015990">
    <property type="term" value="P:electron transport coupled proton transport"/>
    <property type="evidence" value="ECO:0007669"/>
    <property type="project" value="TreeGrafter"/>
</dbReference>
<dbReference type="FunFam" id="3.40.50.12280:FF:000002">
    <property type="entry name" value="NADH-quinone oxidoreductase subunit B"/>
    <property type="match status" value="1"/>
</dbReference>
<dbReference type="Gene3D" id="3.40.50.12280">
    <property type="match status" value="1"/>
</dbReference>
<dbReference type="HAMAP" id="MF_01356">
    <property type="entry name" value="NDH1_NuoB"/>
    <property type="match status" value="1"/>
</dbReference>
<dbReference type="InterPro" id="IPR006137">
    <property type="entry name" value="NADH_UbQ_OxRdtase-like_20kDa"/>
</dbReference>
<dbReference type="InterPro" id="IPR006138">
    <property type="entry name" value="NADH_UQ_OxRdtase_20Kd_su"/>
</dbReference>
<dbReference type="NCBIfam" id="TIGR01957">
    <property type="entry name" value="nuoB_fam"/>
    <property type="match status" value="1"/>
</dbReference>
<dbReference type="NCBIfam" id="NF005012">
    <property type="entry name" value="PRK06411.1"/>
    <property type="match status" value="1"/>
</dbReference>
<dbReference type="NCBIfam" id="NF011392">
    <property type="entry name" value="PRK14817.1"/>
    <property type="match status" value="1"/>
</dbReference>
<dbReference type="PANTHER" id="PTHR11995">
    <property type="entry name" value="NADH DEHYDROGENASE"/>
    <property type="match status" value="1"/>
</dbReference>
<dbReference type="PANTHER" id="PTHR11995:SF14">
    <property type="entry name" value="NADH DEHYDROGENASE [UBIQUINONE] IRON-SULFUR PROTEIN 7, MITOCHONDRIAL"/>
    <property type="match status" value="1"/>
</dbReference>
<dbReference type="Pfam" id="PF01058">
    <property type="entry name" value="Oxidored_q6"/>
    <property type="match status" value="1"/>
</dbReference>
<dbReference type="SUPFAM" id="SSF56770">
    <property type="entry name" value="HydA/Nqo6-like"/>
    <property type="match status" value="1"/>
</dbReference>
<dbReference type="PROSITE" id="PS01150">
    <property type="entry name" value="COMPLEX1_20K"/>
    <property type="match status" value="1"/>
</dbReference>
<reference key="1">
    <citation type="journal article" date="2006" name="Proc. Natl. Acad. Sci. U.S.A.">
        <title>Evolution of sensory complexity recorded in a myxobacterial genome.</title>
        <authorList>
            <person name="Goldman B.S."/>
            <person name="Nierman W.C."/>
            <person name="Kaiser D."/>
            <person name="Slater S.C."/>
            <person name="Durkin A.S."/>
            <person name="Eisen J.A."/>
            <person name="Ronning C.M."/>
            <person name="Barbazuk W.B."/>
            <person name="Blanchard M."/>
            <person name="Field C."/>
            <person name="Halling C."/>
            <person name="Hinkle G."/>
            <person name="Iartchuk O."/>
            <person name="Kim H.S."/>
            <person name="Mackenzie C."/>
            <person name="Madupu R."/>
            <person name="Miller N."/>
            <person name="Shvartsbeyn A."/>
            <person name="Sullivan S.A."/>
            <person name="Vaudin M."/>
            <person name="Wiegand R."/>
            <person name="Kaplan H.B."/>
        </authorList>
    </citation>
    <scope>NUCLEOTIDE SEQUENCE [LARGE SCALE GENOMIC DNA]</scope>
    <source>
        <strain>DK1622</strain>
    </source>
</reference>
<evidence type="ECO:0000255" key="1">
    <source>
        <dbReference type="HAMAP-Rule" id="MF_01356"/>
    </source>
</evidence>
<feature type="chain" id="PRO_0000376287" description="NADH-quinone oxidoreductase subunit B">
    <location>
        <begin position="1"/>
        <end position="187"/>
    </location>
</feature>
<feature type="binding site" evidence="1">
    <location>
        <position position="46"/>
    </location>
    <ligand>
        <name>[4Fe-4S] cluster</name>
        <dbReference type="ChEBI" id="CHEBI:49883"/>
    </ligand>
</feature>
<feature type="binding site" evidence="1">
    <location>
        <position position="47"/>
    </location>
    <ligand>
        <name>[4Fe-4S] cluster</name>
        <dbReference type="ChEBI" id="CHEBI:49883"/>
    </ligand>
</feature>
<feature type="binding site" evidence="1">
    <location>
        <position position="112"/>
    </location>
    <ligand>
        <name>[4Fe-4S] cluster</name>
        <dbReference type="ChEBI" id="CHEBI:49883"/>
    </ligand>
</feature>
<feature type="binding site" evidence="1">
    <location>
        <position position="141"/>
    </location>
    <ligand>
        <name>[4Fe-4S] cluster</name>
        <dbReference type="ChEBI" id="CHEBI:49883"/>
    </ligand>
</feature>
<comment type="function">
    <text evidence="1">NDH-1 shuttles electrons from NADH, via FMN and iron-sulfur (Fe-S) centers, to quinones in the respiratory chain. The immediate electron acceptor for the enzyme in this species is believed to be ubiquinone. Couples the redox reaction to proton translocation (for every two electrons transferred, four hydrogen ions are translocated across the cytoplasmic membrane), and thus conserves the redox energy in a proton gradient.</text>
</comment>
<comment type="catalytic activity">
    <reaction evidence="1">
        <text>a quinone + NADH + 5 H(+)(in) = a quinol + NAD(+) + 4 H(+)(out)</text>
        <dbReference type="Rhea" id="RHEA:57888"/>
        <dbReference type="ChEBI" id="CHEBI:15378"/>
        <dbReference type="ChEBI" id="CHEBI:24646"/>
        <dbReference type="ChEBI" id="CHEBI:57540"/>
        <dbReference type="ChEBI" id="CHEBI:57945"/>
        <dbReference type="ChEBI" id="CHEBI:132124"/>
    </reaction>
</comment>
<comment type="cofactor">
    <cofactor evidence="1">
        <name>[4Fe-4S] cluster</name>
        <dbReference type="ChEBI" id="CHEBI:49883"/>
    </cofactor>
    <text evidence="1">Binds 1 [4Fe-4S] cluster.</text>
</comment>
<comment type="subunit">
    <text evidence="1">NDH-1 is composed of 14 different subunits. Subunits NuoB, C, D, E, F, and G constitute the peripheral sector of the complex.</text>
</comment>
<comment type="subcellular location">
    <subcellularLocation>
        <location evidence="1">Cell inner membrane</location>
        <topology evidence="1">Peripheral membrane protein</topology>
        <orientation evidence="1">Cytoplasmic side</orientation>
    </subcellularLocation>
</comment>
<comment type="similarity">
    <text evidence="1">Belongs to the complex I 20 kDa subunit family.</text>
</comment>
<gene>
    <name evidence="1" type="primary">nuoB</name>
    <name type="ordered locus">MXAN_2733</name>
</gene>
<proteinExistence type="inferred from homology"/>
<organism>
    <name type="scientific">Myxococcus xanthus (strain DK1622)</name>
    <dbReference type="NCBI Taxonomy" id="246197"/>
    <lineage>
        <taxon>Bacteria</taxon>
        <taxon>Pseudomonadati</taxon>
        <taxon>Myxococcota</taxon>
        <taxon>Myxococcia</taxon>
        <taxon>Myxococcales</taxon>
        <taxon>Cystobacterineae</taxon>
        <taxon>Myxococcaceae</taxon>
        <taxon>Myxococcus</taxon>
    </lineage>
</organism>